<comment type="function">
    <text evidence="1">Catalyzes the ATP-dependent conversion of 7-carboxy-7-deazaguanine (CDG) to 7-cyano-7-deazaguanine (preQ(0)).</text>
</comment>
<comment type="catalytic activity">
    <reaction evidence="1">
        <text>7-carboxy-7-deazaguanine + NH4(+) + ATP = 7-cyano-7-deazaguanine + ADP + phosphate + H2O + H(+)</text>
        <dbReference type="Rhea" id="RHEA:27982"/>
        <dbReference type="ChEBI" id="CHEBI:15377"/>
        <dbReference type="ChEBI" id="CHEBI:15378"/>
        <dbReference type="ChEBI" id="CHEBI:28938"/>
        <dbReference type="ChEBI" id="CHEBI:30616"/>
        <dbReference type="ChEBI" id="CHEBI:43474"/>
        <dbReference type="ChEBI" id="CHEBI:45075"/>
        <dbReference type="ChEBI" id="CHEBI:61036"/>
        <dbReference type="ChEBI" id="CHEBI:456216"/>
        <dbReference type="EC" id="6.3.4.20"/>
    </reaction>
</comment>
<comment type="cofactor">
    <cofactor evidence="1">
        <name>Zn(2+)</name>
        <dbReference type="ChEBI" id="CHEBI:29105"/>
    </cofactor>
    <text evidence="1">Binds 1 zinc ion per subunit.</text>
</comment>
<comment type="pathway">
    <text evidence="1">Purine metabolism; 7-cyano-7-deazaguanine biosynthesis.</text>
</comment>
<comment type="subunit">
    <text evidence="1">Homodimer.</text>
</comment>
<comment type="similarity">
    <text evidence="1">Belongs to the QueC family.</text>
</comment>
<keyword id="KW-0067">ATP-binding</keyword>
<keyword id="KW-0436">Ligase</keyword>
<keyword id="KW-0479">Metal-binding</keyword>
<keyword id="KW-0547">Nucleotide-binding</keyword>
<keyword id="KW-0671">Queuosine biosynthesis</keyword>
<keyword id="KW-0862">Zinc</keyword>
<gene>
    <name evidence="1" type="primary">queC</name>
    <name type="ordered locus">BCG9842_B3949</name>
</gene>
<dbReference type="EC" id="6.3.4.20" evidence="1"/>
<dbReference type="EMBL" id="CP001186">
    <property type="protein sequence ID" value="ACK96227.1"/>
    <property type="molecule type" value="Genomic_DNA"/>
</dbReference>
<dbReference type="RefSeq" id="WP_000711598.1">
    <property type="nucleotide sequence ID" value="NC_011772.1"/>
</dbReference>
<dbReference type="SMR" id="B7IN35"/>
<dbReference type="KEGG" id="bcg:BCG9842_B3949"/>
<dbReference type="HOGENOM" id="CLU_081854_0_0_9"/>
<dbReference type="UniPathway" id="UPA00391"/>
<dbReference type="Proteomes" id="UP000006744">
    <property type="component" value="Chromosome"/>
</dbReference>
<dbReference type="GO" id="GO:0005524">
    <property type="term" value="F:ATP binding"/>
    <property type="evidence" value="ECO:0007669"/>
    <property type="project" value="UniProtKB-UniRule"/>
</dbReference>
<dbReference type="GO" id="GO:0016879">
    <property type="term" value="F:ligase activity, forming carbon-nitrogen bonds"/>
    <property type="evidence" value="ECO:0007669"/>
    <property type="project" value="UniProtKB-UniRule"/>
</dbReference>
<dbReference type="GO" id="GO:0008270">
    <property type="term" value="F:zinc ion binding"/>
    <property type="evidence" value="ECO:0007669"/>
    <property type="project" value="UniProtKB-UniRule"/>
</dbReference>
<dbReference type="GO" id="GO:0008616">
    <property type="term" value="P:queuosine biosynthetic process"/>
    <property type="evidence" value="ECO:0007669"/>
    <property type="project" value="UniProtKB-UniRule"/>
</dbReference>
<dbReference type="CDD" id="cd01995">
    <property type="entry name" value="QueC-like"/>
    <property type="match status" value="1"/>
</dbReference>
<dbReference type="FunFam" id="3.40.50.620:FF:000017">
    <property type="entry name" value="7-cyano-7-deazaguanine synthase"/>
    <property type="match status" value="1"/>
</dbReference>
<dbReference type="Gene3D" id="3.40.50.620">
    <property type="entry name" value="HUPs"/>
    <property type="match status" value="1"/>
</dbReference>
<dbReference type="HAMAP" id="MF_01633">
    <property type="entry name" value="QueC"/>
    <property type="match status" value="1"/>
</dbReference>
<dbReference type="InterPro" id="IPR018317">
    <property type="entry name" value="QueC"/>
</dbReference>
<dbReference type="InterPro" id="IPR014729">
    <property type="entry name" value="Rossmann-like_a/b/a_fold"/>
</dbReference>
<dbReference type="NCBIfam" id="TIGR00364">
    <property type="entry name" value="7-cyano-7-deazaguanine synthase QueC"/>
    <property type="match status" value="1"/>
</dbReference>
<dbReference type="PANTHER" id="PTHR42914">
    <property type="entry name" value="7-CYANO-7-DEAZAGUANINE SYNTHASE"/>
    <property type="match status" value="1"/>
</dbReference>
<dbReference type="PANTHER" id="PTHR42914:SF1">
    <property type="entry name" value="7-CYANO-7-DEAZAGUANINE SYNTHASE"/>
    <property type="match status" value="1"/>
</dbReference>
<dbReference type="Pfam" id="PF06508">
    <property type="entry name" value="QueC"/>
    <property type="match status" value="1"/>
</dbReference>
<dbReference type="PIRSF" id="PIRSF006293">
    <property type="entry name" value="ExsB"/>
    <property type="match status" value="1"/>
</dbReference>
<dbReference type="SUPFAM" id="SSF52402">
    <property type="entry name" value="Adenine nucleotide alpha hydrolases-like"/>
    <property type="match status" value="1"/>
</dbReference>
<sequence length="220" mass="24539">MKKEKAVVVFSGGQDSTTCLFWAIEQFAEVEAVTFNYNQRHKLEIDCAAKIAKELGIKHTVLDMSLLNQLAPNALTRTDMEITHEEGELPSTFVDGRNLLFLSFAAVLAKQVGARHIVTGVCETDFSGYPDCRDVFVKSLNVTLNLSMDYPFVIHTPLMWIDKAETWKLSDELGAFEFVREKTLTCYNGIIGDGCGECPACQLRKAGLDTYLQEREGANN</sequence>
<accession>B7IN35</accession>
<organism>
    <name type="scientific">Bacillus cereus (strain G9842)</name>
    <dbReference type="NCBI Taxonomy" id="405531"/>
    <lineage>
        <taxon>Bacteria</taxon>
        <taxon>Bacillati</taxon>
        <taxon>Bacillota</taxon>
        <taxon>Bacilli</taxon>
        <taxon>Bacillales</taxon>
        <taxon>Bacillaceae</taxon>
        <taxon>Bacillus</taxon>
        <taxon>Bacillus cereus group</taxon>
    </lineage>
</organism>
<feature type="chain" id="PRO_1000186556" description="7-cyano-7-deazaguanine synthase">
    <location>
        <begin position="1"/>
        <end position="220"/>
    </location>
</feature>
<feature type="binding site" evidence="1">
    <location>
        <begin position="10"/>
        <end position="20"/>
    </location>
    <ligand>
        <name>ATP</name>
        <dbReference type="ChEBI" id="CHEBI:30616"/>
    </ligand>
</feature>
<feature type="binding site" evidence="1">
    <location>
        <position position="186"/>
    </location>
    <ligand>
        <name>Zn(2+)</name>
        <dbReference type="ChEBI" id="CHEBI:29105"/>
    </ligand>
</feature>
<feature type="binding site" evidence="1">
    <location>
        <position position="195"/>
    </location>
    <ligand>
        <name>Zn(2+)</name>
        <dbReference type="ChEBI" id="CHEBI:29105"/>
    </ligand>
</feature>
<feature type="binding site" evidence="1">
    <location>
        <position position="198"/>
    </location>
    <ligand>
        <name>Zn(2+)</name>
        <dbReference type="ChEBI" id="CHEBI:29105"/>
    </ligand>
</feature>
<feature type="binding site" evidence="1">
    <location>
        <position position="201"/>
    </location>
    <ligand>
        <name>Zn(2+)</name>
        <dbReference type="ChEBI" id="CHEBI:29105"/>
    </ligand>
</feature>
<evidence type="ECO:0000255" key="1">
    <source>
        <dbReference type="HAMAP-Rule" id="MF_01633"/>
    </source>
</evidence>
<reference key="1">
    <citation type="submission" date="2008-10" db="EMBL/GenBank/DDBJ databases">
        <title>Genome sequence of Bacillus cereus G9842.</title>
        <authorList>
            <person name="Dodson R.J."/>
            <person name="Durkin A.S."/>
            <person name="Rosovitz M.J."/>
            <person name="Rasko D.A."/>
            <person name="Hoffmaster A."/>
            <person name="Ravel J."/>
            <person name="Sutton G."/>
        </authorList>
    </citation>
    <scope>NUCLEOTIDE SEQUENCE [LARGE SCALE GENOMIC DNA]</scope>
    <source>
        <strain>G9842</strain>
    </source>
</reference>
<protein>
    <recommendedName>
        <fullName evidence="1">7-cyano-7-deazaguanine synthase</fullName>
        <ecNumber evidence="1">6.3.4.20</ecNumber>
    </recommendedName>
    <alternativeName>
        <fullName evidence="1">7-cyano-7-carbaguanine synthase</fullName>
    </alternativeName>
    <alternativeName>
        <fullName evidence="1">PreQ(0) synthase</fullName>
    </alternativeName>
    <alternativeName>
        <fullName evidence="1">Queuosine biosynthesis protein QueC</fullName>
    </alternativeName>
</protein>
<name>QUEC_BACC2</name>
<proteinExistence type="inferred from homology"/>